<organism>
    <name type="scientific">Mycobacterium tuberculosis (strain CDC 1551 / Oshkosh)</name>
    <dbReference type="NCBI Taxonomy" id="83331"/>
    <lineage>
        <taxon>Bacteria</taxon>
        <taxon>Bacillati</taxon>
        <taxon>Actinomycetota</taxon>
        <taxon>Actinomycetes</taxon>
        <taxon>Mycobacteriales</taxon>
        <taxon>Mycobacteriaceae</taxon>
        <taxon>Mycobacterium</taxon>
        <taxon>Mycobacterium tuberculosis complex</taxon>
    </lineage>
</organism>
<dbReference type="EMBL" id="AE000516">
    <property type="protein sequence ID" value="AAK45238.1"/>
    <property type="molecule type" value="Genomic_DNA"/>
</dbReference>
<dbReference type="PIR" id="H70717">
    <property type="entry name" value="H70717"/>
</dbReference>
<dbReference type="RefSeq" id="WP_003898662.1">
    <property type="nucleotide sequence ID" value="NZ_KK341227.1"/>
</dbReference>
<dbReference type="KEGG" id="mtc:MT0990"/>
<dbReference type="PATRIC" id="fig|83331.31.peg.1062"/>
<dbReference type="HOGENOM" id="CLU_091332_0_0_11"/>
<dbReference type="Proteomes" id="UP000001020">
    <property type="component" value="Chromosome"/>
</dbReference>
<dbReference type="GO" id="GO:0005886">
    <property type="term" value="C:plasma membrane"/>
    <property type="evidence" value="ECO:0007669"/>
    <property type="project" value="UniProtKB-SubCell"/>
</dbReference>
<dbReference type="Gene3D" id="3.30.2030.20">
    <property type="match status" value="1"/>
</dbReference>
<dbReference type="InterPro" id="IPR032018">
    <property type="entry name" value="LppA/LppB/LprP"/>
</dbReference>
<dbReference type="Pfam" id="PF16708">
    <property type="entry name" value="LppA"/>
    <property type="match status" value="1"/>
</dbReference>
<dbReference type="PROSITE" id="PS51257">
    <property type="entry name" value="PROKAR_LIPOPROTEIN"/>
    <property type="match status" value="1"/>
</dbReference>
<accession>P9WK38</accession>
<accession>L0T5F3</accession>
<accession>P71548</accession>
<reference key="1">
    <citation type="journal article" date="2002" name="J. Bacteriol.">
        <title>Whole-genome comparison of Mycobacterium tuberculosis clinical and laboratory strains.</title>
        <authorList>
            <person name="Fleischmann R.D."/>
            <person name="Alland D."/>
            <person name="Eisen J.A."/>
            <person name="Carpenter L."/>
            <person name="White O."/>
            <person name="Peterson J.D."/>
            <person name="DeBoy R.T."/>
            <person name="Dodson R.J."/>
            <person name="Gwinn M.L."/>
            <person name="Haft D.H."/>
            <person name="Hickey E.K."/>
            <person name="Kolonay J.F."/>
            <person name="Nelson W.C."/>
            <person name="Umayam L.A."/>
            <person name="Ermolaeva M.D."/>
            <person name="Salzberg S.L."/>
            <person name="Delcher A."/>
            <person name="Utterback T.R."/>
            <person name="Weidman J.F."/>
            <person name="Khouri H.M."/>
            <person name="Gill J."/>
            <person name="Mikula A."/>
            <person name="Bishai W."/>
            <person name="Jacobs W.R. Jr."/>
            <person name="Venter J.C."/>
            <person name="Fraser C.M."/>
        </authorList>
    </citation>
    <scope>NUCLEOTIDE SEQUENCE [LARGE SCALE GENOMIC DNA]</scope>
    <source>
        <strain>CDC 1551 / Oshkosh</strain>
    </source>
</reference>
<keyword id="KW-1003">Cell membrane</keyword>
<keyword id="KW-0449">Lipoprotein</keyword>
<keyword id="KW-0472">Membrane</keyword>
<keyword id="KW-0564">Palmitate</keyword>
<keyword id="KW-1185">Reference proteome</keyword>
<keyword id="KW-0732">Signal</keyword>
<comment type="subcellular location">
    <subcellularLocation>
        <location evidence="2">Cell membrane</location>
        <topology evidence="2">Lipid-anchor</topology>
    </subcellularLocation>
</comment>
<comment type="similarity">
    <text evidence="2">To M.bovis LprP.</text>
</comment>
<evidence type="ECO:0000255" key="1">
    <source>
        <dbReference type="PROSITE-ProRule" id="PRU00303"/>
    </source>
</evidence>
<evidence type="ECO:0000305" key="2"/>
<sequence>MKRTSRSLTAALLGIAALLAGCIKPNTFDPYANPGRGELDRRQKIVNGRPDLETVQQQLANLDATIRAMIAKYSPQTRFSTGVTVSHLTNGCNDPFTRTIGRQEASELFFGRPAPTPQQWLQIVTELAPVFKAAGFRPNNSVPGDPPQPLGAPNYSQIRDDGVTINLVNGDNRGPLGYSYNTGCHLPAAWRTAPPPLNMRPANDPDVHYPYLYGSPGGRTRDAY</sequence>
<proteinExistence type="inferred from homology"/>
<protein>
    <recommendedName>
        <fullName>Uncharacterized lipoprotein LprP</fullName>
    </recommendedName>
</protein>
<name>LPRP_MYCTO</name>
<feature type="signal peptide" evidence="1">
    <location>
        <begin position="1"/>
        <end position="21"/>
    </location>
</feature>
<feature type="chain" id="PRO_0000427721" description="Uncharacterized lipoprotein LprP">
    <location>
        <begin position="22"/>
        <end position="224"/>
    </location>
</feature>
<feature type="lipid moiety-binding region" description="N-palmitoyl cysteine" evidence="2">
    <location>
        <position position="22"/>
    </location>
</feature>
<feature type="lipid moiety-binding region" description="S-diacylglycerol cysteine" evidence="2">
    <location>
        <position position="22"/>
    </location>
</feature>
<gene>
    <name type="primary">lprP</name>
    <name type="ordered locus">MT0990</name>
</gene>